<name>RNY_BORBU</name>
<reference key="1">
    <citation type="journal article" date="1997" name="Nature">
        <title>Genomic sequence of a Lyme disease spirochaete, Borrelia burgdorferi.</title>
        <authorList>
            <person name="Fraser C.M."/>
            <person name="Casjens S."/>
            <person name="Huang W.M."/>
            <person name="Sutton G.G."/>
            <person name="Clayton R.A."/>
            <person name="Lathigra R."/>
            <person name="White O."/>
            <person name="Ketchum K.A."/>
            <person name="Dodson R.J."/>
            <person name="Hickey E.K."/>
            <person name="Gwinn M.L."/>
            <person name="Dougherty B.A."/>
            <person name="Tomb J.-F."/>
            <person name="Fleischmann R.D."/>
            <person name="Richardson D.L."/>
            <person name="Peterson J.D."/>
            <person name="Kerlavage A.R."/>
            <person name="Quackenbush J."/>
            <person name="Salzberg S.L."/>
            <person name="Hanson M."/>
            <person name="van Vugt R."/>
            <person name="Palmer N."/>
            <person name="Adams M.D."/>
            <person name="Gocayne J.D."/>
            <person name="Weidman J.F."/>
            <person name="Utterback T.R."/>
            <person name="Watthey L."/>
            <person name="McDonald L.A."/>
            <person name="Artiach P."/>
            <person name="Bowman C."/>
            <person name="Garland S.A."/>
            <person name="Fujii C."/>
            <person name="Cotton M.D."/>
            <person name="Horst K."/>
            <person name="Roberts K.M."/>
            <person name="Hatch B."/>
            <person name="Smith H.O."/>
            <person name="Venter J.C."/>
        </authorList>
    </citation>
    <scope>NUCLEOTIDE SEQUENCE [LARGE SCALE GENOMIC DNA]</scope>
    <source>
        <strain>ATCC 35210 / DSM 4680 / CIP 102532 / B31</strain>
    </source>
</reference>
<gene>
    <name evidence="1" type="primary">rny</name>
    <name type="ordered locus">BB_0504</name>
</gene>
<dbReference type="EC" id="3.1.-.-" evidence="1"/>
<dbReference type="EMBL" id="AE000783">
    <property type="protein sequence ID" value="AAC66875.1"/>
    <property type="molecule type" value="Genomic_DNA"/>
</dbReference>
<dbReference type="PIR" id="G70162">
    <property type="entry name" value="G70162"/>
</dbReference>
<dbReference type="RefSeq" id="NP_212638.1">
    <property type="nucleotide sequence ID" value="NC_001318.1"/>
</dbReference>
<dbReference type="RefSeq" id="WP_002656978.1">
    <property type="nucleotide sequence ID" value="NC_001318.1"/>
</dbReference>
<dbReference type="SMR" id="O51457"/>
<dbReference type="STRING" id="224326.BB_0504"/>
<dbReference type="PaxDb" id="224326-BB_0504"/>
<dbReference type="DNASU" id="1195350"/>
<dbReference type="EnsemblBacteria" id="AAC66875">
    <property type="protein sequence ID" value="AAC66875"/>
    <property type="gene ID" value="BB_0504"/>
</dbReference>
<dbReference type="GeneID" id="56567939"/>
<dbReference type="KEGG" id="bbu:BB_0504"/>
<dbReference type="PATRIC" id="fig|224326.49.peg.895"/>
<dbReference type="HOGENOM" id="CLU_028328_1_0_12"/>
<dbReference type="OrthoDB" id="9803205at2"/>
<dbReference type="Proteomes" id="UP000001807">
    <property type="component" value="Chromosome"/>
</dbReference>
<dbReference type="GO" id="GO:0005886">
    <property type="term" value="C:plasma membrane"/>
    <property type="evidence" value="ECO:0007669"/>
    <property type="project" value="UniProtKB-SubCell"/>
</dbReference>
<dbReference type="GO" id="GO:0003723">
    <property type="term" value="F:RNA binding"/>
    <property type="evidence" value="ECO:0007669"/>
    <property type="project" value="UniProtKB-UniRule"/>
</dbReference>
<dbReference type="GO" id="GO:0004521">
    <property type="term" value="F:RNA endonuclease activity"/>
    <property type="evidence" value="ECO:0007669"/>
    <property type="project" value="UniProtKB-UniRule"/>
</dbReference>
<dbReference type="GO" id="GO:0006402">
    <property type="term" value="P:mRNA catabolic process"/>
    <property type="evidence" value="ECO:0007669"/>
    <property type="project" value="UniProtKB-UniRule"/>
</dbReference>
<dbReference type="CDD" id="cd00077">
    <property type="entry name" value="HDc"/>
    <property type="match status" value="1"/>
</dbReference>
<dbReference type="CDD" id="cd22431">
    <property type="entry name" value="KH-I_RNaseY"/>
    <property type="match status" value="1"/>
</dbReference>
<dbReference type="Gene3D" id="3.30.310.210">
    <property type="match status" value="1"/>
</dbReference>
<dbReference type="Gene3D" id="1.10.3210.10">
    <property type="entry name" value="Hypothetical protein af1432"/>
    <property type="match status" value="1"/>
</dbReference>
<dbReference type="HAMAP" id="MF_00335">
    <property type="entry name" value="RNase_Y"/>
    <property type="match status" value="1"/>
</dbReference>
<dbReference type="InterPro" id="IPR003607">
    <property type="entry name" value="HD/PDEase_dom"/>
</dbReference>
<dbReference type="InterPro" id="IPR006674">
    <property type="entry name" value="HD_domain"/>
</dbReference>
<dbReference type="InterPro" id="IPR006675">
    <property type="entry name" value="HDIG_dom"/>
</dbReference>
<dbReference type="InterPro" id="IPR004087">
    <property type="entry name" value="KH_dom"/>
</dbReference>
<dbReference type="InterPro" id="IPR004088">
    <property type="entry name" value="KH_dom_type_1"/>
</dbReference>
<dbReference type="InterPro" id="IPR036612">
    <property type="entry name" value="KH_dom_type_1_sf"/>
</dbReference>
<dbReference type="InterPro" id="IPR017705">
    <property type="entry name" value="Ribonuclease_Y"/>
</dbReference>
<dbReference type="InterPro" id="IPR022711">
    <property type="entry name" value="RNase_Y_N"/>
</dbReference>
<dbReference type="NCBIfam" id="TIGR00277">
    <property type="entry name" value="HDIG"/>
    <property type="match status" value="1"/>
</dbReference>
<dbReference type="NCBIfam" id="TIGR03319">
    <property type="entry name" value="RNase_Y"/>
    <property type="match status" value="1"/>
</dbReference>
<dbReference type="PANTHER" id="PTHR12826">
    <property type="entry name" value="RIBONUCLEASE Y"/>
    <property type="match status" value="1"/>
</dbReference>
<dbReference type="PANTHER" id="PTHR12826:SF15">
    <property type="entry name" value="RIBONUCLEASE Y"/>
    <property type="match status" value="1"/>
</dbReference>
<dbReference type="Pfam" id="PF01966">
    <property type="entry name" value="HD"/>
    <property type="match status" value="1"/>
</dbReference>
<dbReference type="Pfam" id="PF00013">
    <property type="entry name" value="KH_1"/>
    <property type="match status" value="1"/>
</dbReference>
<dbReference type="Pfam" id="PF12072">
    <property type="entry name" value="RNase_Y_N"/>
    <property type="match status" value="1"/>
</dbReference>
<dbReference type="SMART" id="SM00471">
    <property type="entry name" value="HDc"/>
    <property type="match status" value="1"/>
</dbReference>
<dbReference type="SMART" id="SM00322">
    <property type="entry name" value="KH"/>
    <property type="match status" value="1"/>
</dbReference>
<dbReference type="SUPFAM" id="SSF54791">
    <property type="entry name" value="Eukaryotic type KH-domain (KH-domain type I)"/>
    <property type="match status" value="1"/>
</dbReference>
<dbReference type="SUPFAM" id="SSF109604">
    <property type="entry name" value="HD-domain/PDEase-like"/>
    <property type="match status" value="1"/>
</dbReference>
<dbReference type="PROSITE" id="PS51831">
    <property type="entry name" value="HD"/>
    <property type="match status" value="1"/>
</dbReference>
<dbReference type="PROSITE" id="PS50084">
    <property type="entry name" value="KH_TYPE_1"/>
    <property type="match status" value="1"/>
</dbReference>
<sequence>MIYIIFSSIFAGFILGFLVRVFLGRLSLLDLEKNLKKVRVESQLEIENERRQIIANAKSQMLKEKNQQDRDIRDRKNEIVNLEKRLLQREETLDKRISALDKQQSRVDFKIKEFEQKEKVIREKEADLVKRLENISGLTREDARKIVIEKVEHESKRDAQVIINKSEQEAQLLADKVAKDILVSTMQRIVTEVSSEFTVASVELPNDEMKGRIIGKEGRNIRALETLIGADIIIDDTPEAVVISCFDPIRKELAKRTLERLVTDGRIHPARIEEVVYNVTNEINSIIQEEGEKVVFDLNIHGLDKRLIRGLGRLYFRSSYGQNVLSHSKETAIIGEILAKEMKLDPVVVKRACLLHDIGKGMESISDNSEGHAITGAELAQSCGESEIVVNAIAAHHNEVKPESLEAIVVQIADAISASRPGARRESLNNYINRLKRLEDIAYSFEGVQKCYAIQAGREVRIIVDNALINDEKSILLARDIAKKIEAEMRYPGKIKVTIIRETRVIEYAR</sequence>
<proteinExistence type="inferred from homology"/>
<feature type="chain" id="PRO_0000163767" description="Ribonuclease Y">
    <location>
        <begin position="1"/>
        <end position="510"/>
    </location>
</feature>
<feature type="transmembrane region" description="Helical" evidence="1">
    <location>
        <begin position="2"/>
        <end position="22"/>
    </location>
</feature>
<feature type="domain" description="KH" evidence="1">
    <location>
        <begin position="198"/>
        <end position="258"/>
    </location>
</feature>
<feature type="domain" description="HD" evidence="2">
    <location>
        <begin position="324"/>
        <end position="419"/>
    </location>
</feature>
<protein>
    <recommendedName>
        <fullName evidence="1">Ribonuclease Y</fullName>
        <shortName evidence="1">RNase Y</shortName>
        <ecNumber evidence="1">3.1.-.-</ecNumber>
    </recommendedName>
</protein>
<accession>O51457</accession>
<comment type="function">
    <text evidence="1">Endoribonuclease that initiates mRNA decay.</text>
</comment>
<comment type="subcellular location">
    <subcellularLocation>
        <location evidence="1">Cell membrane</location>
        <topology evidence="1">Single-pass membrane protein</topology>
    </subcellularLocation>
</comment>
<comment type="similarity">
    <text evidence="1">Belongs to the RNase Y family.</text>
</comment>
<keyword id="KW-1003">Cell membrane</keyword>
<keyword id="KW-0255">Endonuclease</keyword>
<keyword id="KW-0378">Hydrolase</keyword>
<keyword id="KW-0472">Membrane</keyword>
<keyword id="KW-0540">Nuclease</keyword>
<keyword id="KW-1185">Reference proteome</keyword>
<keyword id="KW-0694">RNA-binding</keyword>
<keyword id="KW-0812">Transmembrane</keyword>
<keyword id="KW-1133">Transmembrane helix</keyword>
<organism>
    <name type="scientific">Borreliella burgdorferi (strain ATCC 35210 / DSM 4680 / CIP 102532 / B31)</name>
    <name type="common">Borrelia burgdorferi</name>
    <dbReference type="NCBI Taxonomy" id="224326"/>
    <lineage>
        <taxon>Bacteria</taxon>
        <taxon>Pseudomonadati</taxon>
        <taxon>Spirochaetota</taxon>
        <taxon>Spirochaetia</taxon>
        <taxon>Spirochaetales</taxon>
        <taxon>Borreliaceae</taxon>
        <taxon>Borreliella</taxon>
    </lineage>
</organism>
<evidence type="ECO:0000255" key="1">
    <source>
        <dbReference type="HAMAP-Rule" id="MF_00335"/>
    </source>
</evidence>
<evidence type="ECO:0000255" key="2">
    <source>
        <dbReference type="PROSITE-ProRule" id="PRU01175"/>
    </source>
</evidence>